<organism>
    <name type="scientific">Mus musculus</name>
    <name type="common">Mouse</name>
    <dbReference type="NCBI Taxonomy" id="10090"/>
    <lineage>
        <taxon>Eukaryota</taxon>
        <taxon>Metazoa</taxon>
        <taxon>Chordata</taxon>
        <taxon>Craniata</taxon>
        <taxon>Vertebrata</taxon>
        <taxon>Euteleostomi</taxon>
        <taxon>Mammalia</taxon>
        <taxon>Eutheria</taxon>
        <taxon>Euarchontoglires</taxon>
        <taxon>Glires</taxon>
        <taxon>Rodentia</taxon>
        <taxon>Myomorpha</taxon>
        <taxon>Muroidea</taxon>
        <taxon>Muridae</taxon>
        <taxon>Murinae</taxon>
        <taxon>Mus</taxon>
        <taxon>Mus</taxon>
    </lineage>
</organism>
<proteinExistence type="evidence at protein level"/>
<gene>
    <name type="primary">Ctsc</name>
</gene>
<evidence type="ECO:0000250" key="1">
    <source>
        <dbReference type="UniProtKB" id="P53634"/>
    </source>
</evidence>
<evidence type="ECO:0000255" key="2"/>
<evidence type="ECO:0000255" key="3">
    <source>
        <dbReference type="PROSITE-ProRule" id="PRU10088"/>
    </source>
</evidence>
<evidence type="ECO:0000255" key="4">
    <source>
        <dbReference type="PROSITE-ProRule" id="PRU10089"/>
    </source>
</evidence>
<evidence type="ECO:0000255" key="5">
    <source>
        <dbReference type="PROSITE-ProRule" id="PRU10090"/>
    </source>
</evidence>
<evidence type="ECO:0000269" key="6">
    <source>
    </source>
</evidence>
<dbReference type="EC" id="3.4.14.1"/>
<dbReference type="EMBL" id="U89269">
    <property type="protein sequence ID" value="AAB49457.1"/>
    <property type="molecule type" value="mRNA"/>
</dbReference>
<dbReference type="EMBL" id="U74683">
    <property type="protein sequence ID" value="AAB58400.3"/>
    <property type="molecule type" value="mRNA"/>
</dbReference>
<dbReference type="EMBL" id="BC067063">
    <property type="protein sequence ID" value="AAH67063.1"/>
    <property type="molecule type" value="mRNA"/>
</dbReference>
<dbReference type="CCDS" id="CCDS21438.1"/>
<dbReference type="RefSeq" id="NP_034112.3">
    <property type="nucleotide sequence ID" value="NM_009982.5"/>
</dbReference>
<dbReference type="SMR" id="P97821"/>
<dbReference type="BioGRID" id="198969">
    <property type="interactions" value="3"/>
</dbReference>
<dbReference type="FunCoup" id="P97821">
    <property type="interactions" value="1023"/>
</dbReference>
<dbReference type="IntAct" id="P97821">
    <property type="interactions" value="1"/>
</dbReference>
<dbReference type="MINT" id="P97821"/>
<dbReference type="STRING" id="10090.ENSMUSP00000032779"/>
<dbReference type="BindingDB" id="P97821"/>
<dbReference type="ChEMBL" id="CHEMBL3454"/>
<dbReference type="GuidetoPHARMACOLOGY" id="2344"/>
<dbReference type="MEROPS" id="C01.070"/>
<dbReference type="GlyCosmos" id="P97821">
    <property type="glycosylation" value="3 sites, No reported glycans"/>
</dbReference>
<dbReference type="GlyGen" id="P97821">
    <property type="glycosylation" value="4 sites, 1 N-linked glycan (1 site), 1 O-linked glycan (1 site)"/>
</dbReference>
<dbReference type="iPTMnet" id="P97821"/>
<dbReference type="PhosphoSitePlus" id="P97821"/>
<dbReference type="SwissPalm" id="P97821"/>
<dbReference type="jPOST" id="P97821"/>
<dbReference type="PaxDb" id="10090-ENSMUSP00000032779"/>
<dbReference type="PeptideAtlas" id="P97821"/>
<dbReference type="ProteomicsDB" id="265550"/>
<dbReference type="Antibodypedia" id="31473">
    <property type="antibodies" value="280 antibodies from 30 providers"/>
</dbReference>
<dbReference type="DNASU" id="13032"/>
<dbReference type="Ensembl" id="ENSMUST00000032779.12">
    <property type="protein sequence ID" value="ENSMUSP00000032779.6"/>
    <property type="gene ID" value="ENSMUSG00000030560.18"/>
</dbReference>
<dbReference type="GeneID" id="13032"/>
<dbReference type="KEGG" id="mmu:13032"/>
<dbReference type="UCSC" id="uc009ifu.2">
    <property type="organism name" value="mouse"/>
</dbReference>
<dbReference type="AGR" id="MGI:109553"/>
<dbReference type="CTD" id="1075"/>
<dbReference type="MGI" id="MGI:109553">
    <property type="gene designation" value="Ctsc"/>
</dbReference>
<dbReference type="VEuPathDB" id="HostDB:ENSMUSG00000030560"/>
<dbReference type="eggNOG" id="KOG1543">
    <property type="taxonomic scope" value="Eukaryota"/>
</dbReference>
<dbReference type="GeneTree" id="ENSGT00940000155787"/>
<dbReference type="HOGENOM" id="CLU_048219_0_0_1"/>
<dbReference type="InParanoid" id="P97821"/>
<dbReference type="OMA" id="NAVQKSW"/>
<dbReference type="OrthoDB" id="3789175at2759"/>
<dbReference type="PhylomeDB" id="P97821"/>
<dbReference type="TreeFam" id="TF313225"/>
<dbReference type="BRENDA" id="3.4.14.1">
    <property type="organism ID" value="3474"/>
</dbReference>
<dbReference type="Reactome" id="R-MMU-204005">
    <property type="pathway name" value="COPII-mediated vesicle transport"/>
</dbReference>
<dbReference type="Reactome" id="R-MMU-2132295">
    <property type="pathway name" value="MHC class II antigen presentation"/>
</dbReference>
<dbReference type="Reactome" id="R-MMU-5694530">
    <property type="pathway name" value="Cargo concentration in the ER"/>
</dbReference>
<dbReference type="Reactome" id="R-MMU-6798695">
    <property type="pathway name" value="Neutrophil degranulation"/>
</dbReference>
<dbReference type="BioGRID-ORCS" id="13032">
    <property type="hits" value="2 hits in 79 CRISPR screens"/>
</dbReference>
<dbReference type="ChiTaRS" id="Ctsc">
    <property type="organism name" value="mouse"/>
</dbReference>
<dbReference type="PRO" id="PR:P97821"/>
<dbReference type="Proteomes" id="UP000000589">
    <property type="component" value="Chromosome 7"/>
</dbReference>
<dbReference type="RNAct" id="P97821">
    <property type="molecule type" value="protein"/>
</dbReference>
<dbReference type="Bgee" id="ENSMUSG00000030560">
    <property type="expression patterns" value="Expressed in left lung lobe and 242 other cell types or tissues"/>
</dbReference>
<dbReference type="ExpressionAtlas" id="P97821">
    <property type="expression patterns" value="baseline and differential"/>
</dbReference>
<dbReference type="GO" id="GO:0005813">
    <property type="term" value="C:centrosome"/>
    <property type="evidence" value="ECO:0007669"/>
    <property type="project" value="Ensembl"/>
</dbReference>
<dbReference type="GO" id="GO:0062023">
    <property type="term" value="C:collagen-containing extracellular matrix"/>
    <property type="evidence" value="ECO:0007005"/>
    <property type="project" value="BHF-UCL"/>
</dbReference>
<dbReference type="GO" id="GO:0005737">
    <property type="term" value="C:cytoplasm"/>
    <property type="evidence" value="ECO:0000314"/>
    <property type="project" value="MGI"/>
</dbReference>
<dbReference type="GO" id="GO:0005764">
    <property type="term" value="C:lysosome"/>
    <property type="evidence" value="ECO:0007669"/>
    <property type="project" value="UniProtKB-SubCell"/>
</dbReference>
<dbReference type="GO" id="GO:0005654">
    <property type="term" value="C:nucleoplasm"/>
    <property type="evidence" value="ECO:0007669"/>
    <property type="project" value="Ensembl"/>
</dbReference>
<dbReference type="GO" id="GO:0031404">
    <property type="term" value="F:chloride ion binding"/>
    <property type="evidence" value="ECO:0007669"/>
    <property type="project" value="Ensembl"/>
</dbReference>
<dbReference type="GO" id="GO:0008234">
    <property type="term" value="F:cysteine-type peptidase activity"/>
    <property type="evidence" value="ECO:0000314"/>
    <property type="project" value="MGI"/>
</dbReference>
<dbReference type="GO" id="GO:0008239">
    <property type="term" value="F:dipeptidyl-peptidase activity"/>
    <property type="evidence" value="ECO:0007669"/>
    <property type="project" value="UniProtKB-EC"/>
</dbReference>
<dbReference type="GO" id="GO:0042802">
    <property type="term" value="F:identical protein binding"/>
    <property type="evidence" value="ECO:0007669"/>
    <property type="project" value="Ensembl"/>
</dbReference>
<dbReference type="GO" id="GO:0016505">
    <property type="term" value="F:peptidase activator activity involved in apoptotic process"/>
    <property type="evidence" value="ECO:0000316"/>
    <property type="project" value="MGI"/>
</dbReference>
<dbReference type="GO" id="GO:0019902">
    <property type="term" value="F:phosphatase binding"/>
    <property type="evidence" value="ECO:0007669"/>
    <property type="project" value="Ensembl"/>
</dbReference>
<dbReference type="GO" id="GO:0051087">
    <property type="term" value="F:protein-folding chaperone binding"/>
    <property type="evidence" value="ECO:0007669"/>
    <property type="project" value="Ensembl"/>
</dbReference>
<dbReference type="GO" id="GO:0004252">
    <property type="term" value="F:serine-type endopeptidase activity"/>
    <property type="evidence" value="ECO:0000315"/>
    <property type="project" value="UniProtKB"/>
</dbReference>
<dbReference type="GO" id="GO:0031642">
    <property type="term" value="P:negative regulation of myelination"/>
    <property type="evidence" value="ECO:0000314"/>
    <property type="project" value="MGI"/>
</dbReference>
<dbReference type="GO" id="GO:2001235">
    <property type="term" value="P:positive regulation of apoptotic signaling pathway"/>
    <property type="evidence" value="ECO:0000316"/>
    <property type="project" value="MGI"/>
</dbReference>
<dbReference type="GO" id="GO:1903980">
    <property type="term" value="P:positive regulation of microglial cell activation"/>
    <property type="evidence" value="ECO:0000314"/>
    <property type="project" value="MGI"/>
</dbReference>
<dbReference type="GO" id="GO:1903052">
    <property type="term" value="P:positive regulation of proteolysis involved in protein catabolic process"/>
    <property type="evidence" value="ECO:0007669"/>
    <property type="project" value="Ensembl"/>
</dbReference>
<dbReference type="GO" id="GO:0006508">
    <property type="term" value="P:proteolysis"/>
    <property type="evidence" value="ECO:0000315"/>
    <property type="project" value="UniProtKB"/>
</dbReference>
<dbReference type="GO" id="GO:0001913">
    <property type="term" value="P:T cell mediated cytotoxicity"/>
    <property type="evidence" value="ECO:0000316"/>
    <property type="project" value="UniProtKB"/>
</dbReference>
<dbReference type="CDD" id="cd02621">
    <property type="entry name" value="Peptidase_C1A_CathepsinC"/>
    <property type="match status" value="1"/>
</dbReference>
<dbReference type="FunFam" id="2.40.128.80:FF:000001">
    <property type="entry name" value="Dipeptidyl peptidase 1"/>
    <property type="match status" value="1"/>
</dbReference>
<dbReference type="FunFam" id="3.90.70.10:FF:000062">
    <property type="entry name" value="Dipeptidyl peptidase 1"/>
    <property type="match status" value="1"/>
</dbReference>
<dbReference type="Gene3D" id="2.40.128.80">
    <property type="entry name" value="Cathepsin C, exclusion domain"/>
    <property type="match status" value="1"/>
</dbReference>
<dbReference type="Gene3D" id="3.90.70.10">
    <property type="entry name" value="Cysteine proteinases"/>
    <property type="match status" value="1"/>
</dbReference>
<dbReference type="InterPro" id="IPR039412">
    <property type="entry name" value="CatC"/>
</dbReference>
<dbReference type="InterPro" id="IPR014882">
    <property type="entry name" value="CathepsinC_exc"/>
</dbReference>
<dbReference type="InterPro" id="IPR036496">
    <property type="entry name" value="CathepsinC_exc_dom_sf"/>
</dbReference>
<dbReference type="InterPro" id="IPR038765">
    <property type="entry name" value="Papain-like_cys_pep_sf"/>
</dbReference>
<dbReference type="InterPro" id="IPR025661">
    <property type="entry name" value="Pept_asp_AS"/>
</dbReference>
<dbReference type="InterPro" id="IPR000169">
    <property type="entry name" value="Pept_cys_AS"/>
</dbReference>
<dbReference type="InterPro" id="IPR025660">
    <property type="entry name" value="Pept_his_AS"/>
</dbReference>
<dbReference type="InterPro" id="IPR013128">
    <property type="entry name" value="Peptidase_C1A"/>
</dbReference>
<dbReference type="InterPro" id="IPR000668">
    <property type="entry name" value="Peptidase_C1A_C"/>
</dbReference>
<dbReference type="PANTHER" id="PTHR12411">
    <property type="entry name" value="CYSTEINE PROTEASE FAMILY C1-RELATED"/>
    <property type="match status" value="1"/>
</dbReference>
<dbReference type="Pfam" id="PF08773">
    <property type="entry name" value="CathepsinC_exc"/>
    <property type="match status" value="1"/>
</dbReference>
<dbReference type="Pfam" id="PF00112">
    <property type="entry name" value="Peptidase_C1"/>
    <property type="match status" value="1"/>
</dbReference>
<dbReference type="PRINTS" id="PR00705">
    <property type="entry name" value="PAPAIN"/>
</dbReference>
<dbReference type="SMART" id="SM00645">
    <property type="entry name" value="Pept_C1"/>
    <property type="match status" value="1"/>
</dbReference>
<dbReference type="SUPFAM" id="SSF54001">
    <property type="entry name" value="Cysteine proteinases"/>
    <property type="match status" value="1"/>
</dbReference>
<dbReference type="SUPFAM" id="SSF75001">
    <property type="entry name" value="Dipeptidyl peptidase I (cathepsin C), exclusion domain"/>
    <property type="match status" value="1"/>
</dbReference>
<dbReference type="PROSITE" id="PS00640">
    <property type="entry name" value="THIOL_PROTEASE_ASN"/>
    <property type="match status" value="1"/>
</dbReference>
<dbReference type="PROSITE" id="PS00139">
    <property type="entry name" value="THIOL_PROTEASE_CYS"/>
    <property type="match status" value="1"/>
</dbReference>
<dbReference type="PROSITE" id="PS00639">
    <property type="entry name" value="THIOL_PROTEASE_HIS"/>
    <property type="match status" value="1"/>
</dbReference>
<feature type="signal peptide" evidence="1">
    <location>
        <begin position="1"/>
        <end position="24"/>
    </location>
</feature>
<feature type="chain" id="PRO_0000026346" description="Dipeptidyl peptidase 1 exclusion domain chain" evidence="1">
    <location>
        <begin position="25"/>
        <end position="134"/>
    </location>
</feature>
<feature type="propeptide" id="PRO_0000026347" evidence="1">
    <location>
        <begin position="135"/>
        <end position="230"/>
    </location>
</feature>
<feature type="chain" id="PRO_0000026348" description="Dipeptidyl peptidase 1 heavy chain">
    <location>
        <begin position="231"/>
        <end position="393"/>
    </location>
</feature>
<feature type="chain" id="PRO_0000026349" description="Dipeptidyl peptidase 1 light chain">
    <location>
        <begin position="394"/>
        <end position="462"/>
    </location>
</feature>
<feature type="active site" evidence="3">
    <location>
        <position position="257"/>
    </location>
</feature>
<feature type="active site" evidence="4">
    <location>
        <position position="404"/>
    </location>
</feature>
<feature type="active site" evidence="5">
    <location>
        <position position="426"/>
    </location>
</feature>
<feature type="binding site" evidence="1">
    <location>
        <position position="301"/>
    </location>
    <ligand>
        <name>chloride</name>
        <dbReference type="ChEBI" id="CHEBI:17996"/>
    </ligand>
</feature>
<feature type="binding site" evidence="1">
    <location>
        <position position="303"/>
    </location>
    <ligand>
        <name>chloride</name>
        <dbReference type="ChEBI" id="CHEBI:17996"/>
    </ligand>
</feature>
<feature type="binding site" evidence="1">
    <location>
        <position position="346"/>
    </location>
    <ligand>
        <name>chloride</name>
        <dbReference type="ChEBI" id="CHEBI:17996"/>
    </ligand>
</feature>
<feature type="glycosylation site" description="N-linked (GlcNAc...) asparagine" evidence="2">
    <location>
        <position position="29"/>
    </location>
</feature>
<feature type="glycosylation site" description="N-linked (GlcNAc...) asparagine" evidence="2">
    <location>
        <position position="53"/>
    </location>
</feature>
<feature type="glycosylation site" description="N-linked (GlcNAc...) asparagine" evidence="2">
    <location>
        <position position="275"/>
    </location>
</feature>
<feature type="disulfide bond" evidence="1">
    <location>
        <begin position="30"/>
        <end position="118"/>
    </location>
</feature>
<feature type="disulfide bond" evidence="1">
    <location>
        <begin position="54"/>
        <end position="136"/>
    </location>
</feature>
<feature type="disulfide bond" evidence="1">
    <location>
        <begin position="254"/>
        <end position="297"/>
    </location>
</feature>
<feature type="disulfide bond" evidence="1">
    <location>
        <begin position="290"/>
        <end position="330"/>
    </location>
</feature>
<feature type="disulfide bond" evidence="1">
    <location>
        <begin position="320"/>
        <end position="336"/>
    </location>
</feature>
<sequence>MGPWTHSLRAVLLLVLLGVCTVRSDTPANCTYPDLLGTWVFQVGPRSSRSDINCSVMEATEEKVVVHLKKLDTAYDELGNSGHFTLIYNQGFEIVLNDYKWFAFFKYEVRGHTAISYCHETMTGWVHDVLGRNWACFVGKKVESHIEKVNMNAAHLGGLQERYSERLYTHNHNFVKAINTVQKSWTATAYKEYEKMSLRDLIRRSGHSQRIPRPKPAPMTDEIQQQILNLPESWDWRNVQGVNYVSPVRNQESCGSCYSFASMGMLEARIRILTNNSQTPILSPQEVVSCSPYAQGCDGGFPYLIAGKYAQDFGVVEESCFPYTAKDSPCKPRENCLRYYSSDYYYVGGFYGGCNEALMKLELVKHGPMAVAFEVHDDFLHYHSGIYHHTGLSDPFNPFELTNHAVLLVGYGRDPVTGIEYWIIKNSWGSNWGESGYFRIRRGTDECAIESIAVAAIPIPKL</sequence>
<name>CATC_MOUSE</name>
<comment type="function">
    <text evidence="1">Thiol protease. Has dipeptidylpeptidase activity. Active against a broad range of dipeptide substrates composed of both polar and hydrophobic amino acids. Proline cannot occupy the P1 position and arginine cannot occupy the P2 position of the substrate. Can act as both an exopeptidase and endopeptidase. Activates serine proteases such as elastase, cathepsin G and granzymes A and B.</text>
</comment>
<comment type="catalytic activity">
    <reaction evidence="1">
        <text>Release of an N-terminal dipeptide, Xaa-Yaa-|-Zaa-, except when Xaa is Arg or Lys, or Yaa or Zaa is Pro.</text>
        <dbReference type="EC" id="3.4.14.1"/>
    </reaction>
</comment>
<comment type="cofactor">
    <cofactor evidence="1">
        <name>chloride</name>
        <dbReference type="ChEBI" id="CHEBI:17996"/>
    </cofactor>
    <text evidence="1">Binds 1 Cl(-) ion per heavy chain.</text>
</comment>
<comment type="subunit">
    <text evidence="1">Tetramer of heterotrimers consisting of exclusion domain, heavy- and light chains.</text>
</comment>
<comment type="subcellular location">
    <subcellularLocation>
        <location evidence="1">Lysosome</location>
    </subcellularLocation>
</comment>
<comment type="tissue specificity">
    <text evidence="6">Broadly distributed, but higher levels found in lung, liver, kidney and spleen. Lower levels found in testis and brain.</text>
</comment>
<comment type="similarity">
    <text evidence="3 4 5">Belongs to the peptidase C1 family.</text>
</comment>
<reference key="1">
    <citation type="journal article" date="1997" name="J. Biol. Chem.">
        <title>Molecular cloning, chromosomal localization, and expression of murine dipeptidyl peptidase I.</title>
        <authorList>
            <person name="Pham C.T.N."/>
            <person name="Armstrong R.J."/>
            <person name="Zimonjic D.B."/>
            <person name="Popescu N.C."/>
            <person name="Payan D.G."/>
            <person name="Ley T.J."/>
        </authorList>
    </citation>
    <scope>NUCLEOTIDE SEQUENCE [MRNA]</scope>
    <scope>TISSUE SPECIFICITY</scope>
    <source>
        <strain>129/SvJ</strain>
    </source>
</reference>
<reference key="2">
    <citation type="journal article" date="1997" name="Biochim. Biophys. Acta">
        <title>Cloning and characterization of the cDNA encoding mouse dipeptidyl peptidase I (cathepsin C).</title>
        <authorList>
            <person name="McGuire M.J."/>
            <person name="Lipsky P.E."/>
            <person name="Thiele D.L."/>
        </authorList>
    </citation>
    <scope>NUCLEOTIDE SEQUENCE [MRNA]</scope>
    <source>
        <strain>BALB/cJ</strain>
    </source>
</reference>
<reference key="3">
    <citation type="submission" date="2000-04" db="EMBL/GenBank/DDBJ databases">
        <authorList>
            <person name="McGuire M.J."/>
            <person name="Lipsky P.E."/>
            <person name="Francisco N.M.C."/>
            <person name="Thiele D.L."/>
        </authorList>
    </citation>
    <scope>SEQUENCE REVISION</scope>
</reference>
<reference key="4">
    <citation type="journal article" date="2004" name="Genome Res.">
        <title>The status, quality, and expansion of the NIH full-length cDNA project: the Mammalian Gene Collection (MGC).</title>
        <authorList>
            <consortium name="The MGC Project Team"/>
        </authorList>
    </citation>
    <scope>NUCLEOTIDE SEQUENCE [LARGE SCALE MRNA]</scope>
    <source>
        <strain>C57BL/6J</strain>
        <tissue>Eye</tissue>
    </source>
</reference>
<reference key="5">
    <citation type="journal article" date="2010" name="Cell">
        <title>A tissue-specific atlas of mouse protein phosphorylation and expression.</title>
        <authorList>
            <person name="Huttlin E.L."/>
            <person name="Jedrychowski M.P."/>
            <person name="Elias J.E."/>
            <person name="Goswami T."/>
            <person name="Rad R."/>
            <person name="Beausoleil S.A."/>
            <person name="Villen J."/>
            <person name="Haas W."/>
            <person name="Sowa M.E."/>
            <person name="Gygi S.P."/>
        </authorList>
    </citation>
    <scope>IDENTIFICATION BY MASS SPECTROMETRY [LARGE SCALE ANALYSIS]</scope>
    <source>
        <tissue>Heart</tissue>
        <tissue>Kidney</tissue>
        <tissue>Liver</tissue>
        <tissue>Lung</tissue>
        <tissue>Pancreas</tissue>
        <tissue>Spleen</tissue>
        <tissue>Testis</tissue>
    </source>
</reference>
<keyword id="KW-0868">Chloride</keyword>
<keyword id="KW-1015">Disulfide bond</keyword>
<keyword id="KW-0325">Glycoprotein</keyword>
<keyword id="KW-0378">Hydrolase</keyword>
<keyword id="KW-0458">Lysosome</keyword>
<keyword id="KW-0645">Protease</keyword>
<keyword id="KW-1185">Reference proteome</keyword>
<keyword id="KW-0732">Signal</keyword>
<keyword id="KW-0788">Thiol protease</keyword>
<keyword id="KW-0865">Zymogen</keyword>
<protein>
    <recommendedName>
        <fullName>Dipeptidyl peptidase 1</fullName>
        <ecNumber>3.4.14.1</ecNumber>
    </recommendedName>
    <alternativeName>
        <fullName>Cathepsin C</fullName>
    </alternativeName>
    <alternativeName>
        <fullName>Cathepsin J</fullName>
    </alternativeName>
    <alternativeName>
        <fullName>Dipeptidyl peptidase I</fullName>
        <shortName>DPP-I</shortName>
        <shortName>DPPI</shortName>
    </alternativeName>
    <alternativeName>
        <fullName>Dipeptidyl transferase</fullName>
    </alternativeName>
    <component>
        <recommendedName>
            <fullName>Dipeptidyl peptidase 1 exclusion domain chain</fullName>
        </recommendedName>
        <alternativeName>
            <fullName>Dipeptidyl peptidase I exclusion domain chain</fullName>
        </alternativeName>
    </component>
    <component>
        <recommendedName>
            <fullName>Dipeptidyl peptidase 1 heavy chain</fullName>
        </recommendedName>
        <alternativeName>
            <fullName>Dipeptidyl peptidase I heavy chain</fullName>
        </alternativeName>
    </component>
    <component>
        <recommendedName>
            <fullName>Dipeptidyl peptidase 1 light chain</fullName>
        </recommendedName>
        <alternativeName>
            <fullName>Dipeptidyl peptidase I light chain</fullName>
        </alternativeName>
    </component>
</protein>
<accession>P97821</accession>
<accession>O08853</accession>